<dbReference type="EMBL" id="AE015924">
    <property type="protein sequence ID" value="AAQ65583.1"/>
    <property type="molecule type" value="Genomic_DNA"/>
</dbReference>
<dbReference type="RefSeq" id="WP_004584903.1">
    <property type="nucleotide sequence ID" value="NC_002950.2"/>
</dbReference>
<dbReference type="SMR" id="Q7MX42"/>
<dbReference type="STRING" id="242619.PG_0376"/>
<dbReference type="EnsemblBacteria" id="AAQ65583">
    <property type="protein sequence ID" value="AAQ65583"/>
    <property type="gene ID" value="PG_0376"/>
</dbReference>
<dbReference type="GeneID" id="29256764"/>
<dbReference type="KEGG" id="pgi:PG_0376"/>
<dbReference type="eggNOG" id="COG0103">
    <property type="taxonomic scope" value="Bacteria"/>
</dbReference>
<dbReference type="HOGENOM" id="CLU_046483_2_1_10"/>
<dbReference type="Proteomes" id="UP000000588">
    <property type="component" value="Chromosome"/>
</dbReference>
<dbReference type="GO" id="GO:0022627">
    <property type="term" value="C:cytosolic small ribosomal subunit"/>
    <property type="evidence" value="ECO:0007669"/>
    <property type="project" value="TreeGrafter"/>
</dbReference>
<dbReference type="GO" id="GO:0003723">
    <property type="term" value="F:RNA binding"/>
    <property type="evidence" value="ECO:0007669"/>
    <property type="project" value="TreeGrafter"/>
</dbReference>
<dbReference type="GO" id="GO:0003735">
    <property type="term" value="F:structural constituent of ribosome"/>
    <property type="evidence" value="ECO:0007669"/>
    <property type="project" value="InterPro"/>
</dbReference>
<dbReference type="GO" id="GO:0006412">
    <property type="term" value="P:translation"/>
    <property type="evidence" value="ECO:0007669"/>
    <property type="project" value="UniProtKB-UniRule"/>
</dbReference>
<dbReference type="FunFam" id="3.30.230.10:FF:000001">
    <property type="entry name" value="30S ribosomal protein S9"/>
    <property type="match status" value="1"/>
</dbReference>
<dbReference type="Gene3D" id="3.30.230.10">
    <property type="match status" value="1"/>
</dbReference>
<dbReference type="HAMAP" id="MF_00532_B">
    <property type="entry name" value="Ribosomal_uS9_B"/>
    <property type="match status" value="1"/>
</dbReference>
<dbReference type="InterPro" id="IPR020568">
    <property type="entry name" value="Ribosomal_Su5_D2-typ_SF"/>
</dbReference>
<dbReference type="InterPro" id="IPR000754">
    <property type="entry name" value="Ribosomal_uS9"/>
</dbReference>
<dbReference type="InterPro" id="IPR023035">
    <property type="entry name" value="Ribosomal_uS9_bac/plastid"/>
</dbReference>
<dbReference type="InterPro" id="IPR020574">
    <property type="entry name" value="Ribosomal_uS9_CS"/>
</dbReference>
<dbReference type="InterPro" id="IPR014721">
    <property type="entry name" value="Ribsml_uS5_D2-typ_fold_subgr"/>
</dbReference>
<dbReference type="NCBIfam" id="NF001099">
    <property type="entry name" value="PRK00132.1"/>
    <property type="match status" value="1"/>
</dbReference>
<dbReference type="PANTHER" id="PTHR21569">
    <property type="entry name" value="RIBOSOMAL PROTEIN S9"/>
    <property type="match status" value="1"/>
</dbReference>
<dbReference type="PANTHER" id="PTHR21569:SF1">
    <property type="entry name" value="SMALL RIBOSOMAL SUBUNIT PROTEIN US9M"/>
    <property type="match status" value="1"/>
</dbReference>
<dbReference type="Pfam" id="PF00380">
    <property type="entry name" value="Ribosomal_S9"/>
    <property type="match status" value="1"/>
</dbReference>
<dbReference type="SUPFAM" id="SSF54211">
    <property type="entry name" value="Ribosomal protein S5 domain 2-like"/>
    <property type="match status" value="1"/>
</dbReference>
<dbReference type="PROSITE" id="PS00360">
    <property type="entry name" value="RIBOSOMAL_S9"/>
    <property type="match status" value="1"/>
</dbReference>
<gene>
    <name evidence="1" type="primary">rpsI</name>
    <name type="ordered locus">PG_0376</name>
</gene>
<organism>
    <name type="scientific">Porphyromonas gingivalis (strain ATCC BAA-308 / W83)</name>
    <dbReference type="NCBI Taxonomy" id="242619"/>
    <lineage>
        <taxon>Bacteria</taxon>
        <taxon>Pseudomonadati</taxon>
        <taxon>Bacteroidota</taxon>
        <taxon>Bacteroidia</taxon>
        <taxon>Bacteroidales</taxon>
        <taxon>Porphyromonadaceae</taxon>
        <taxon>Porphyromonas</taxon>
    </lineage>
</organism>
<protein>
    <recommendedName>
        <fullName evidence="1">Small ribosomal subunit protein uS9</fullName>
    </recommendedName>
    <alternativeName>
        <fullName evidence="3">30S ribosomal protein S9</fullName>
    </alternativeName>
</protein>
<keyword id="KW-1185">Reference proteome</keyword>
<keyword id="KW-0687">Ribonucleoprotein</keyword>
<keyword id="KW-0689">Ribosomal protein</keyword>
<sequence length="128" mass="14526">MDYINAIGRRKAAVARVYLSEGSGKIVINKREIEQYFPSSILQYIVKQPLLKLDVAAKYDIKINLRGGGFKGQSEAARLAIARALVKINPDDKPALRSEGFITRDPRVVERKKPGRPKARKRFQFSKR</sequence>
<accession>Q7MX42</accession>
<reference key="1">
    <citation type="journal article" date="2003" name="J. Bacteriol.">
        <title>Complete genome sequence of the oral pathogenic bacterium Porphyromonas gingivalis strain W83.</title>
        <authorList>
            <person name="Nelson K.E."/>
            <person name="Fleischmann R.D."/>
            <person name="DeBoy R.T."/>
            <person name="Paulsen I.T."/>
            <person name="Fouts D.E."/>
            <person name="Eisen J.A."/>
            <person name="Daugherty S.C."/>
            <person name="Dodson R.J."/>
            <person name="Durkin A.S."/>
            <person name="Gwinn M.L."/>
            <person name="Haft D.H."/>
            <person name="Kolonay J.F."/>
            <person name="Nelson W.C."/>
            <person name="Mason T.M."/>
            <person name="Tallon L."/>
            <person name="Gray J."/>
            <person name="Granger D."/>
            <person name="Tettelin H."/>
            <person name="Dong H."/>
            <person name="Galvin J.L."/>
            <person name="Duncan M.J."/>
            <person name="Dewhirst F.E."/>
            <person name="Fraser C.M."/>
        </authorList>
    </citation>
    <scope>NUCLEOTIDE SEQUENCE [LARGE SCALE GENOMIC DNA]</scope>
    <source>
        <strain>ATCC BAA-308 / W83</strain>
    </source>
</reference>
<name>RS9_PORGI</name>
<feature type="chain" id="PRO_0000111387" description="Small ribosomal subunit protein uS9">
    <location>
        <begin position="1"/>
        <end position="128"/>
    </location>
</feature>
<feature type="region of interest" description="Disordered" evidence="2">
    <location>
        <begin position="106"/>
        <end position="128"/>
    </location>
</feature>
<feature type="compositionally biased region" description="Basic residues" evidence="2">
    <location>
        <begin position="113"/>
        <end position="128"/>
    </location>
</feature>
<comment type="similarity">
    <text evidence="1">Belongs to the universal ribosomal protein uS9 family.</text>
</comment>
<evidence type="ECO:0000255" key="1">
    <source>
        <dbReference type="HAMAP-Rule" id="MF_00532"/>
    </source>
</evidence>
<evidence type="ECO:0000256" key="2">
    <source>
        <dbReference type="SAM" id="MobiDB-lite"/>
    </source>
</evidence>
<evidence type="ECO:0000305" key="3"/>
<proteinExistence type="inferred from homology"/>